<feature type="chain" id="PRO_0000150824" description="Olfactory receptor 8B3">
    <location>
        <begin position="1"/>
        <end position="317"/>
    </location>
</feature>
<feature type="topological domain" description="Extracellular" evidence="1">
    <location>
        <begin position="1"/>
        <end position="32"/>
    </location>
</feature>
<feature type="transmembrane region" description="Helical; Name=1" evidence="1">
    <location>
        <begin position="33"/>
        <end position="53"/>
    </location>
</feature>
<feature type="topological domain" description="Cytoplasmic" evidence="1">
    <location>
        <begin position="54"/>
        <end position="59"/>
    </location>
</feature>
<feature type="transmembrane region" description="Helical; Name=2" evidence="1">
    <location>
        <begin position="60"/>
        <end position="80"/>
    </location>
</feature>
<feature type="topological domain" description="Extracellular" evidence="1">
    <location>
        <begin position="81"/>
        <end position="97"/>
    </location>
</feature>
<feature type="transmembrane region" description="Helical; Name=3" evidence="1">
    <location>
        <begin position="98"/>
        <end position="118"/>
    </location>
</feature>
<feature type="topological domain" description="Cytoplasmic" evidence="1">
    <location>
        <begin position="119"/>
        <end position="136"/>
    </location>
</feature>
<feature type="transmembrane region" description="Helical; Name=4" evidence="1">
    <location>
        <begin position="137"/>
        <end position="157"/>
    </location>
</feature>
<feature type="topological domain" description="Extracellular" evidence="1">
    <location>
        <begin position="158"/>
        <end position="199"/>
    </location>
</feature>
<feature type="transmembrane region" description="Helical; Name=5" evidence="1">
    <location>
        <begin position="200"/>
        <end position="220"/>
    </location>
</feature>
<feature type="topological domain" description="Cytoplasmic" evidence="1">
    <location>
        <begin position="221"/>
        <end position="242"/>
    </location>
</feature>
<feature type="transmembrane region" description="Helical; Name=6" evidence="1">
    <location>
        <begin position="243"/>
        <end position="263"/>
    </location>
</feature>
<feature type="topological domain" description="Extracellular" evidence="1">
    <location>
        <begin position="264"/>
        <end position="274"/>
    </location>
</feature>
<feature type="transmembrane region" description="Helical; Name=7" evidence="1">
    <location>
        <begin position="275"/>
        <end position="294"/>
    </location>
</feature>
<feature type="topological domain" description="Cytoplasmic" evidence="1">
    <location>
        <begin position="295"/>
        <end position="317"/>
    </location>
</feature>
<feature type="glycosylation site" description="N-linked (GlcNAc...) asparagine" evidence="1">
    <location>
        <position position="8"/>
    </location>
</feature>
<accession>Q60886</accession>
<accession>Q7TRD2</accession>
<accession>Q8VGC9</accession>
<gene>
    <name evidence="4" type="primary">Or8b3</name>
    <name evidence="4" type="synonym">Mor164-1</name>
    <name evidence="4" type="synonym">Olfr147</name>
    <name type="synonym">Olfr7</name>
</gene>
<proteinExistence type="inferred from homology"/>
<keyword id="KW-1003">Cell membrane</keyword>
<keyword id="KW-0297">G-protein coupled receptor</keyword>
<keyword id="KW-0325">Glycoprotein</keyword>
<keyword id="KW-0472">Membrane</keyword>
<keyword id="KW-0552">Olfaction</keyword>
<keyword id="KW-0675">Receptor</keyword>
<keyword id="KW-1185">Reference proteome</keyword>
<keyword id="KW-0716">Sensory transduction</keyword>
<keyword id="KW-0807">Transducer</keyword>
<keyword id="KW-0812">Transmembrane</keyword>
<keyword id="KW-1133">Transmembrane helix</keyword>
<protein>
    <recommendedName>
        <fullName evidence="3">Olfactory receptor 8B3</fullName>
    </recommendedName>
    <alternativeName>
        <fullName>Odorant receptor M3</fullName>
    </alternativeName>
    <alternativeName>
        <fullName>Olfactory receptor 147</fullName>
    </alternativeName>
    <alternativeName>
        <fullName>Olfactory receptor 164-1</fullName>
    </alternativeName>
    <alternativeName>
        <fullName>Olfactory receptor 7E</fullName>
    </alternativeName>
</protein>
<reference key="1">
    <citation type="journal article" date="2002" name="Nat. Neurosci.">
        <title>The olfactory receptor gene superfamily of the mouse.</title>
        <authorList>
            <person name="Zhang X."/>
            <person name="Firestein S."/>
        </authorList>
    </citation>
    <scope>NUCLEOTIDE SEQUENCE [GENOMIC DNA]</scope>
</reference>
<reference key="2">
    <citation type="journal article" date="2002" name="Hum. Mol. Genet.">
        <title>Different evolutionary processes shaped the mouse and human olfactory receptor gene families.</title>
        <authorList>
            <person name="Young J.M."/>
            <person name="Friedman C."/>
            <person name="Williams E.M."/>
            <person name="Ross J.A."/>
            <person name="Tonnes-Priddy L."/>
            <person name="Trask B.J."/>
        </authorList>
    </citation>
    <scope>NUCLEOTIDE SEQUENCE [GENOMIC DNA]</scope>
</reference>
<reference key="3">
    <citation type="journal article" date="2002" name="Hum. Mol. Genet.">
        <authorList>
            <person name="Young J.M."/>
            <person name="Friedman C."/>
            <person name="Williams E.M."/>
            <person name="Ross J.A."/>
            <person name="Tonnes-Priddy L."/>
            <person name="Trask B.J."/>
        </authorList>
    </citation>
    <scope>ERRATUM OF PUBMED:11875048</scope>
</reference>
<reference key="4">
    <citation type="journal article" date="1996" name="Proc. Natl. Acad. Sci. U.S.A.">
        <title>The chromosomal distribution of mouse odorant receptor genes.</title>
        <authorList>
            <person name="Sullivan S.L."/>
            <person name="Adamson M.C."/>
            <person name="Ressler K.J."/>
            <person name="Kozak C.A."/>
            <person name="Buck L.B."/>
        </authorList>
    </citation>
    <scope>NUCLEOTIDE SEQUENCE [GENOMIC DNA] OF 131-242</scope>
    <source>
        <strain>C57BL/6J</strain>
    </source>
</reference>
<comment type="function">
    <text evidence="3">Odorant receptor.</text>
</comment>
<comment type="subcellular location">
    <subcellularLocation>
        <location evidence="3">Cell membrane</location>
        <topology evidence="1">Multi-pass membrane protein</topology>
    </subcellularLocation>
</comment>
<comment type="similarity">
    <text evidence="2">Belongs to the G-protein coupled receptor 1 family.</text>
</comment>
<evidence type="ECO:0000255" key="1"/>
<evidence type="ECO:0000255" key="2">
    <source>
        <dbReference type="PROSITE-ProRule" id="PRU00521"/>
    </source>
</evidence>
<evidence type="ECO:0000305" key="3"/>
<evidence type="ECO:0000312" key="4">
    <source>
        <dbReference type="MGI" id="MGI:2660712"/>
    </source>
</evidence>
<organism>
    <name type="scientific">Mus musculus</name>
    <name type="common">Mouse</name>
    <dbReference type="NCBI Taxonomy" id="10090"/>
    <lineage>
        <taxon>Eukaryota</taxon>
        <taxon>Metazoa</taxon>
        <taxon>Chordata</taxon>
        <taxon>Craniata</taxon>
        <taxon>Vertebrata</taxon>
        <taxon>Euteleostomi</taxon>
        <taxon>Mammalia</taxon>
        <taxon>Eutheria</taxon>
        <taxon>Euarchontoglires</taxon>
        <taxon>Glires</taxon>
        <taxon>Rodentia</taxon>
        <taxon>Myomorpha</taxon>
        <taxon>Muroidea</taxon>
        <taxon>Muridae</taxon>
        <taxon>Murinae</taxon>
        <taxon>Mus</taxon>
        <taxon>Mus</taxon>
    </lineage>
</organism>
<name>OR8B3_MOUSE</name>
<dbReference type="EMBL" id="AY073221">
    <property type="protein sequence ID" value="AAL60884.1"/>
    <property type="molecule type" value="Genomic_DNA"/>
</dbReference>
<dbReference type="EMBL" id="AY318086">
    <property type="protein sequence ID" value="AAP71376.2"/>
    <property type="molecule type" value="Genomic_DNA"/>
</dbReference>
<dbReference type="EMBL" id="U28775">
    <property type="protein sequence ID" value="AAC52398.1"/>
    <property type="molecule type" value="Genomic_DNA"/>
</dbReference>
<dbReference type="CCDS" id="CCDS23008.1"/>
<dbReference type="RefSeq" id="NP_667080.1">
    <property type="nucleotide sequence ID" value="NM_146869.2"/>
</dbReference>
<dbReference type="SMR" id="Q60886"/>
<dbReference type="FunCoup" id="Q60886">
    <property type="interactions" value="1210"/>
</dbReference>
<dbReference type="STRING" id="10090.ENSMUSP00000051933"/>
<dbReference type="GlyCosmos" id="Q60886">
    <property type="glycosylation" value="1 site, No reported glycans"/>
</dbReference>
<dbReference type="GlyGen" id="Q60886">
    <property type="glycosylation" value="1 site"/>
</dbReference>
<dbReference type="iPTMnet" id="Q60886"/>
<dbReference type="PhosphoSitePlus" id="Q60886"/>
<dbReference type="PaxDb" id="10090-ENSMUSP00000051933"/>
<dbReference type="DNASU" id="258869"/>
<dbReference type="Ensembl" id="ENSMUST00000056364.3">
    <property type="protein sequence ID" value="ENSMUSP00000051933.3"/>
    <property type="gene ID" value="ENSMUSG00000049098.5"/>
</dbReference>
<dbReference type="GeneID" id="258869"/>
<dbReference type="KEGG" id="mmu:258869"/>
<dbReference type="UCSC" id="uc009owi.2">
    <property type="organism name" value="mouse"/>
</dbReference>
<dbReference type="AGR" id="MGI:2660712"/>
<dbReference type="CTD" id="390271"/>
<dbReference type="MGI" id="MGI:2660712">
    <property type="gene designation" value="Or8b3"/>
</dbReference>
<dbReference type="VEuPathDB" id="HostDB:ENSMUSG00000049098"/>
<dbReference type="eggNOG" id="ENOG502RTZT">
    <property type="taxonomic scope" value="Eukaryota"/>
</dbReference>
<dbReference type="GeneTree" id="ENSGT01010000222320"/>
<dbReference type="HOGENOM" id="CLU_012526_1_0_1"/>
<dbReference type="InParanoid" id="Q60886"/>
<dbReference type="OMA" id="FQQPFFF"/>
<dbReference type="OrthoDB" id="9829559at2759"/>
<dbReference type="PhylomeDB" id="Q60886"/>
<dbReference type="TreeFam" id="TF352753"/>
<dbReference type="Reactome" id="R-MMU-381753">
    <property type="pathway name" value="Olfactory Signaling Pathway"/>
</dbReference>
<dbReference type="BioGRID-ORCS" id="258869">
    <property type="hits" value="2 hits in 70 CRISPR screens"/>
</dbReference>
<dbReference type="PRO" id="PR:Q60886"/>
<dbReference type="Proteomes" id="UP000000589">
    <property type="component" value="Chromosome 9"/>
</dbReference>
<dbReference type="RNAct" id="Q60886">
    <property type="molecule type" value="protein"/>
</dbReference>
<dbReference type="ExpressionAtlas" id="Q60886">
    <property type="expression patterns" value="baseline and differential"/>
</dbReference>
<dbReference type="GO" id="GO:0016020">
    <property type="term" value="C:membrane"/>
    <property type="evidence" value="ECO:0000247"/>
    <property type="project" value="MGI"/>
</dbReference>
<dbReference type="GO" id="GO:0005886">
    <property type="term" value="C:plasma membrane"/>
    <property type="evidence" value="ECO:0007669"/>
    <property type="project" value="UniProtKB-SubCell"/>
</dbReference>
<dbReference type="GO" id="GO:0004930">
    <property type="term" value="F:G protein-coupled receptor activity"/>
    <property type="evidence" value="ECO:0007669"/>
    <property type="project" value="UniProtKB-KW"/>
</dbReference>
<dbReference type="GO" id="GO:0004984">
    <property type="term" value="F:olfactory receptor activity"/>
    <property type="evidence" value="ECO:0000247"/>
    <property type="project" value="MGI"/>
</dbReference>
<dbReference type="GO" id="GO:0007186">
    <property type="term" value="P:G protein-coupled receptor signaling pathway"/>
    <property type="evidence" value="ECO:0000247"/>
    <property type="project" value="MGI"/>
</dbReference>
<dbReference type="GO" id="GO:0007608">
    <property type="term" value="P:sensory perception of smell"/>
    <property type="evidence" value="ECO:0000247"/>
    <property type="project" value="MGI"/>
</dbReference>
<dbReference type="FunFam" id="1.20.1070.10:FF:000646">
    <property type="entry name" value="Olfactory receptor 887"/>
    <property type="match status" value="1"/>
</dbReference>
<dbReference type="FunFam" id="1.20.1070.10:FF:001035">
    <property type="entry name" value="Putative olfactory receptor"/>
    <property type="match status" value="1"/>
</dbReference>
<dbReference type="Gene3D" id="1.20.1070.10">
    <property type="entry name" value="Rhodopsin 7-helix transmembrane proteins"/>
    <property type="match status" value="1"/>
</dbReference>
<dbReference type="InterPro" id="IPR000276">
    <property type="entry name" value="GPCR_Rhodpsn"/>
</dbReference>
<dbReference type="InterPro" id="IPR017452">
    <property type="entry name" value="GPCR_Rhodpsn_7TM"/>
</dbReference>
<dbReference type="InterPro" id="IPR000725">
    <property type="entry name" value="Olfact_rcpt"/>
</dbReference>
<dbReference type="PANTHER" id="PTHR48018">
    <property type="entry name" value="OLFACTORY RECEPTOR"/>
    <property type="match status" value="1"/>
</dbReference>
<dbReference type="Pfam" id="PF13853">
    <property type="entry name" value="7tm_4"/>
    <property type="match status" value="1"/>
</dbReference>
<dbReference type="PRINTS" id="PR00237">
    <property type="entry name" value="GPCRRHODOPSN"/>
</dbReference>
<dbReference type="PRINTS" id="PR00245">
    <property type="entry name" value="OLFACTORYR"/>
</dbReference>
<dbReference type="SUPFAM" id="SSF81321">
    <property type="entry name" value="Family A G protein-coupled receptor-like"/>
    <property type="match status" value="1"/>
</dbReference>
<dbReference type="PROSITE" id="PS00237">
    <property type="entry name" value="G_PROTEIN_RECEP_F1_1"/>
    <property type="match status" value="1"/>
</dbReference>
<dbReference type="PROSITE" id="PS50262">
    <property type="entry name" value="G_PROTEIN_RECEP_F1_2"/>
    <property type="match status" value="1"/>
</dbReference>
<sequence>MISMLAGNGSSVTEFVLAGLTDRPELQLPLFYLFLIIYIITVVGNLGLIILIGLNPHLHTPMYYFLFNLSFIDLCYSSVFSPKMLINFVSEKNSISYAGCMTQLFLFLFFVISECYMLTSMAYDRYVAICNPLLYKVTMSPQICSVISFAAYGMGFAGSSAHTGCMLRLTFCNVNVINHYLCDILPLLQLSCTSTYVNEVVVLIVVGINITVPSFTILISYVFILANILNIKSTQGRAKAFSTCSSHIMAISLFFGSAAFMYLKYSSGSMEQGKISSVFYTNVGPMLNPLIYSLRNKDVKVALRKSLIKFREKTDFN</sequence>